<feature type="chain" id="PRO_0000108481" description="Transcriptional regulator MraZ">
    <location>
        <begin position="1"/>
        <end position="152"/>
    </location>
</feature>
<feature type="domain" description="SpoVT-AbrB 1" evidence="2">
    <location>
        <begin position="5"/>
        <end position="52"/>
    </location>
</feature>
<feature type="domain" description="SpoVT-AbrB 2" evidence="2">
    <location>
        <begin position="81"/>
        <end position="124"/>
    </location>
</feature>
<organism>
    <name type="scientific">Escherichia coli O157:H7</name>
    <dbReference type="NCBI Taxonomy" id="83334"/>
    <lineage>
        <taxon>Bacteria</taxon>
        <taxon>Pseudomonadati</taxon>
        <taxon>Pseudomonadota</taxon>
        <taxon>Gammaproteobacteria</taxon>
        <taxon>Enterobacterales</taxon>
        <taxon>Enterobacteriaceae</taxon>
        <taxon>Escherichia</taxon>
    </lineage>
</organism>
<proteinExistence type="inferred from homology"/>
<sequence>MFRGATLVNLDSKGRLSVPTRYREQLLENAAGQMVCTIDIHHPCLLLYPLPEWEIIEQKLSRLSSMNPVERRVQRLLLGHASECQMDGAGRLLIAPVLRQHAGLTKEVMLVGQFNKFELWDETTWHQQVKEDIDAEQLATGDLSERLQDLSL</sequence>
<keyword id="KW-0963">Cytoplasm</keyword>
<keyword id="KW-0238">DNA-binding</keyword>
<keyword id="KW-1185">Reference proteome</keyword>
<keyword id="KW-0677">Repeat</keyword>
<keyword id="KW-0678">Repressor</keyword>
<keyword id="KW-0804">Transcription</keyword>
<keyword id="KW-0805">Transcription regulation</keyword>
<name>MRAZ_ECO57</name>
<dbReference type="EMBL" id="AE005174">
    <property type="protein sequence ID" value="AAG54385.1"/>
    <property type="molecule type" value="Genomic_DNA"/>
</dbReference>
<dbReference type="EMBL" id="BA000007">
    <property type="protein sequence ID" value="BAB33508.1"/>
    <property type="molecule type" value="Genomic_DNA"/>
</dbReference>
<dbReference type="PIR" id="E85490">
    <property type="entry name" value="E85490"/>
</dbReference>
<dbReference type="PIR" id="E90639">
    <property type="entry name" value="E90639"/>
</dbReference>
<dbReference type="RefSeq" id="NP_308112.1">
    <property type="nucleotide sequence ID" value="NC_002695.1"/>
</dbReference>
<dbReference type="RefSeq" id="WP_001295770.1">
    <property type="nucleotide sequence ID" value="NZ_VOAI01000002.1"/>
</dbReference>
<dbReference type="SMR" id="P65435"/>
<dbReference type="STRING" id="155864.Z0091"/>
<dbReference type="GeneID" id="75202102"/>
<dbReference type="GeneID" id="913528"/>
<dbReference type="KEGG" id="ece:Z0091"/>
<dbReference type="KEGG" id="ecs:ECs_0085"/>
<dbReference type="PATRIC" id="fig|386585.9.peg.185"/>
<dbReference type="eggNOG" id="COG2001">
    <property type="taxonomic scope" value="Bacteria"/>
</dbReference>
<dbReference type="HOGENOM" id="CLU_107907_2_0_6"/>
<dbReference type="OMA" id="ECELDGN"/>
<dbReference type="Proteomes" id="UP000000558">
    <property type="component" value="Chromosome"/>
</dbReference>
<dbReference type="Proteomes" id="UP000002519">
    <property type="component" value="Chromosome"/>
</dbReference>
<dbReference type="GO" id="GO:0005737">
    <property type="term" value="C:cytoplasm"/>
    <property type="evidence" value="ECO:0007669"/>
    <property type="project" value="UniProtKB-UniRule"/>
</dbReference>
<dbReference type="GO" id="GO:0009295">
    <property type="term" value="C:nucleoid"/>
    <property type="evidence" value="ECO:0007669"/>
    <property type="project" value="UniProtKB-SubCell"/>
</dbReference>
<dbReference type="GO" id="GO:0003700">
    <property type="term" value="F:DNA-binding transcription factor activity"/>
    <property type="evidence" value="ECO:0007669"/>
    <property type="project" value="UniProtKB-UniRule"/>
</dbReference>
<dbReference type="GO" id="GO:0000976">
    <property type="term" value="F:transcription cis-regulatory region binding"/>
    <property type="evidence" value="ECO:0007669"/>
    <property type="project" value="TreeGrafter"/>
</dbReference>
<dbReference type="GO" id="GO:2000143">
    <property type="term" value="P:negative regulation of DNA-templated transcription initiation"/>
    <property type="evidence" value="ECO:0007669"/>
    <property type="project" value="TreeGrafter"/>
</dbReference>
<dbReference type="CDD" id="cd16321">
    <property type="entry name" value="MraZ_C"/>
    <property type="match status" value="1"/>
</dbReference>
<dbReference type="CDD" id="cd16320">
    <property type="entry name" value="MraZ_N"/>
    <property type="match status" value="1"/>
</dbReference>
<dbReference type="FunFam" id="3.40.1550.20:FF:000001">
    <property type="entry name" value="Transcriptional regulator MraZ"/>
    <property type="match status" value="1"/>
</dbReference>
<dbReference type="Gene3D" id="3.40.1550.20">
    <property type="entry name" value="Transcriptional regulator MraZ domain"/>
    <property type="match status" value="1"/>
</dbReference>
<dbReference type="HAMAP" id="MF_01008">
    <property type="entry name" value="MraZ"/>
    <property type="match status" value="1"/>
</dbReference>
<dbReference type="InterPro" id="IPR003444">
    <property type="entry name" value="MraZ"/>
</dbReference>
<dbReference type="InterPro" id="IPR035644">
    <property type="entry name" value="MraZ_C"/>
</dbReference>
<dbReference type="InterPro" id="IPR020603">
    <property type="entry name" value="MraZ_dom"/>
</dbReference>
<dbReference type="InterPro" id="IPR035642">
    <property type="entry name" value="MraZ_N"/>
</dbReference>
<dbReference type="InterPro" id="IPR038619">
    <property type="entry name" value="MraZ_sf"/>
</dbReference>
<dbReference type="InterPro" id="IPR007159">
    <property type="entry name" value="SpoVT-AbrB_dom"/>
</dbReference>
<dbReference type="InterPro" id="IPR037914">
    <property type="entry name" value="SpoVT-AbrB_sf"/>
</dbReference>
<dbReference type="NCBIfam" id="TIGR00242">
    <property type="entry name" value="division/cell wall cluster transcriptional repressor MraZ"/>
    <property type="match status" value="1"/>
</dbReference>
<dbReference type="PANTHER" id="PTHR34701">
    <property type="entry name" value="TRANSCRIPTIONAL REGULATOR MRAZ"/>
    <property type="match status" value="1"/>
</dbReference>
<dbReference type="PANTHER" id="PTHR34701:SF1">
    <property type="entry name" value="TRANSCRIPTIONAL REGULATOR MRAZ"/>
    <property type="match status" value="1"/>
</dbReference>
<dbReference type="Pfam" id="PF02381">
    <property type="entry name" value="MraZ"/>
    <property type="match status" value="2"/>
</dbReference>
<dbReference type="SUPFAM" id="SSF89447">
    <property type="entry name" value="AbrB/MazE/MraZ-like"/>
    <property type="match status" value="1"/>
</dbReference>
<dbReference type="PROSITE" id="PS51740">
    <property type="entry name" value="SPOVT_ABRB"/>
    <property type="match status" value="2"/>
</dbReference>
<comment type="function">
    <text evidence="1">Negatively regulates its own expression and that of the subsequent genes in the proximal part of the division and cell wall (dcw) gene cluster. Acts by binding directly to DNA. May also regulate the expression of genes outside the dcw cluster.</text>
</comment>
<comment type="subunit">
    <text evidence="1">Forms oligomers.</text>
</comment>
<comment type="subcellular location">
    <subcellularLocation>
        <location evidence="1">Cytoplasm</location>
        <location evidence="1">Nucleoid</location>
    </subcellularLocation>
</comment>
<comment type="similarity">
    <text evidence="1">Belongs to the MraZ family.</text>
</comment>
<reference key="1">
    <citation type="journal article" date="2001" name="Nature">
        <title>Genome sequence of enterohaemorrhagic Escherichia coli O157:H7.</title>
        <authorList>
            <person name="Perna N.T."/>
            <person name="Plunkett G. III"/>
            <person name="Burland V."/>
            <person name="Mau B."/>
            <person name="Glasner J.D."/>
            <person name="Rose D.J."/>
            <person name="Mayhew G.F."/>
            <person name="Evans P.S."/>
            <person name="Gregor J."/>
            <person name="Kirkpatrick H.A."/>
            <person name="Posfai G."/>
            <person name="Hackett J."/>
            <person name="Klink S."/>
            <person name="Boutin A."/>
            <person name="Shao Y."/>
            <person name="Miller L."/>
            <person name="Grotbeck E.J."/>
            <person name="Davis N.W."/>
            <person name="Lim A."/>
            <person name="Dimalanta E.T."/>
            <person name="Potamousis K."/>
            <person name="Apodaca J."/>
            <person name="Anantharaman T.S."/>
            <person name="Lin J."/>
            <person name="Yen G."/>
            <person name="Schwartz D.C."/>
            <person name="Welch R.A."/>
            <person name="Blattner F.R."/>
        </authorList>
    </citation>
    <scope>NUCLEOTIDE SEQUENCE [LARGE SCALE GENOMIC DNA]</scope>
    <source>
        <strain>O157:H7 / EDL933 / ATCC 700927 / EHEC</strain>
    </source>
</reference>
<reference key="2">
    <citation type="journal article" date="2001" name="DNA Res.">
        <title>Complete genome sequence of enterohemorrhagic Escherichia coli O157:H7 and genomic comparison with a laboratory strain K-12.</title>
        <authorList>
            <person name="Hayashi T."/>
            <person name="Makino K."/>
            <person name="Ohnishi M."/>
            <person name="Kurokawa K."/>
            <person name="Ishii K."/>
            <person name="Yokoyama K."/>
            <person name="Han C.-G."/>
            <person name="Ohtsubo E."/>
            <person name="Nakayama K."/>
            <person name="Murata T."/>
            <person name="Tanaka M."/>
            <person name="Tobe T."/>
            <person name="Iida T."/>
            <person name="Takami H."/>
            <person name="Honda T."/>
            <person name="Sasakawa C."/>
            <person name="Ogasawara N."/>
            <person name="Yasunaga T."/>
            <person name="Kuhara S."/>
            <person name="Shiba T."/>
            <person name="Hattori M."/>
            <person name="Shinagawa H."/>
        </authorList>
    </citation>
    <scope>NUCLEOTIDE SEQUENCE [LARGE SCALE GENOMIC DNA]</scope>
    <source>
        <strain>O157:H7 / Sakai / RIMD 0509952 / EHEC</strain>
    </source>
</reference>
<gene>
    <name evidence="1" type="primary">mraZ</name>
    <name type="ordered locus">Z0091</name>
    <name type="ordered locus">ECs0085</name>
</gene>
<protein>
    <recommendedName>
        <fullName>Transcriptional regulator MraZ</fullName>
    </recommendedName>
</protein>
<evidence type="ECO:0000255" key="1">
    <source>
        <dbReference type="HAMAP-Rule" id="MF_01008"/>
    </source>
</evidence>
<evidence type="ECO:0000255" key="2">
    <source>
        <dbReference type="PROSITE-ProRule" id="PRU01076"/>
    </source>
</evidence>
<accession>P65435</accession>
<accession>Q8X9Z3</accession>